<evidence type="ECO:0000255" key="1">
    <source>
        <dbReference type="HAMAP-Rule" id="MF_00376"/>
    </source>
</evidence>
<keyword id="KW-0067">ATP-binding</keyword>
<keyword id="KW-0173">Coenzyme A biosynthesis</keyword>
<keyword id="KW-0963">Cytoplasm</keyword>
<keyword id="KW-0418">Kinase</keyword>
<keyword id="KW-0547">Nucleotide-binding</keyword>
<keyword id="KW-1185">Reference proteome</keyword>
<keyword id="KW-0808">Transferase</keyword>
<organism>
    <name type="scientific">Cereibacter sphaeroides (strain ATCC 17023 / DSM 158 / JCM 6121 / CCUG 31486 / LMG 2827 / NBRC 12203 / NCIMB 8253 / ATH 2.4.1.)</name>
    <name type="common">Rhodobacter sphaeroides</name>
    <dbReference type="NCBI Taxonomy" id="272943"/>
    <lineage>
        <taxon>Bacteria</taxon>
        <taxon>Pseudomonadati</taxon>
        <taxon>Pseudomonadota</taxon>
        <taxon>Alphaproteobacteria</taxon>
        <taxon>Rhodobacterales</taxon>
        <taxon>Paracoccaceae</taxon>
        <taxon>Cereibacter</taxon>
    </lineage>
</organism>
<dbReference type="EC" id="2.7.1.24" evidence="1"/>
<dbReference type="EMBL" id="CP000143">
    <property type="protein sequence ID" value="ABA80416.1"/>
    <property type="molecule type" value="Genomic_DNA"/>
</dbReference>
<dbReference type="RefSeq" id="WP_011338810.1">
    <property type="nucleotide sequence ID" value="NC_007493.2"/>
</dbReference>
<dbReference type="RefSeq" id="YP_354317.1">
    <property type="nucleotide sequence ID" value="NC_007493.2"/>
</dbReference>
<dbReference type="SMR" id="Q3IYG8"/>
<dbReference type="STRING" id="272943.RSP_1235"/>
<dbReference type="EnsemblBacteria" id="ABA80416">
    <property type="protein sequence ID" value="ABA80416"/>
    <property type="gene ID" value="RSP_1235"/>
</dbReference>
<dbReference type="GeneID" id="3719683"/>
<dbReference type="KEGG" id="rsp:RSP_1235"/>
<dbReference type="PATRIC" id="fig|272943.9.peg.3216"/>
<dbReference type="eggNOG" id="COG0237">
    <property type="taxonomic scope" value="Bacteria"/>
</dbReference>
<dbReference type="OrthoDB" id="9812943at2"/>
<dbReference type="PhylomeDB" id="Q3IYG8"/>
<dbReference type="UniPathway" id="UPA00241">
    <property type="reaction ID" value="UER00356"/>
</dbReference>
<dbReference type="Proteomes" id="UP000002703">
    <property type="component" value="Chromosome 1"/>
</dbReference>
<dbReference type="GO" id="GO:0005737">
    <property type="term" value="C:cytoplasm"/>
    <property type="evidence" value="ECO:0007669"/>
    <property type="project" value="UniProtKB-SubCell"/>
</dbReference>
<dbReference type="GO" id="GO:0005524">
    <property type="term" value="F:ATP binding"/>
    <property type="evidence" value="ECO:0007669"/>
    <property type="project" value="UniProtKB-UniRule"/>
</dbReference>
<dbReference type="GO" id="GO:0004140">
    <property type="term" value="F:dephospho-CoA kinase activity"/>
    <property type="evidence" value="ECO:0007669"/>
    <property type="project" value="UniProtKB-UniRule"/>
</dbReference>
<dbReference type="GO" id="GO:0015937">
    <property type="term" value="P:coenzyme A biosynthetic process"/>
    <property type="evidence" value="ECO:0007669"/>
    <property type="project" value="UniProtKB-UniRule"/>
</dbReference>
<dbReference type="CDD" id="cd02022">
    <property type="entry name" value="DPCK"/>
    <property type="match status" value="1"/>
</dbReference>
<dbReference type="Gene3D" id="3.40.50.300">
    <property type="entry name" value="P-loop containing nucleotide triphosphate hydrolases"/>
    <property type="match status" value="1"/>
</dbReference>
<dbReference type="HAMAP" id="MF_00376">
    <property type="entry name" value="Dephospho_CoA_kinase"/>
    <property type="match status" value="1"/>
</dbReference>
<dbReference type="InterPro" id="IPR001977">
    <property type="entry name" value="Depp_CoAkinase"/>
</dbReference>
<dbReference type="InterPro" id="IPR027417">
    <property type="entry name" value="P-loop_NTPase"/>
</dbReference>
<dbReference type="NCBIfam" id="TIGR00152">
    <property type="entry name" value="dephospho-CoA kinase"/>
    <property type="match status" value="1"/>
</dbReference>
<dbReference type="PANTHER" id="PTHR10695:SF46">
    <property type="entry name" value="BIFUNCTIONAL COENZYME A SYNTHASE-RELATED"/>
    <property type="match status" value="1"/>
</dbReference>
<dbReference type="PANTHER" id="PTHR10695">
    <property type="entry name" value="DEPHOSPHO-COA KINASE-RELATED"/>
    <property type="match status" value="1"/>
</dbReference>
<dbReference type="Pfam" id="PF01121">
    <property type="entry name" value="CoaE"/>
    <property type="match status" value="1"/>
</dbReference>
<dbReference type="SUPFAM" id="SSF52540">
    <property type="entry name" value="P-loop containing nucleoside triphosphate hydrolases"/>
    <property type="match status" value="1"/>
</dbReference>
<dbReference type="PROSITE" id="PS51219">
    <property type="entry name" value="DPCK"/>
    <property type="match status" value="1"/>
</dbReference>
<proteinExistence type="inferred from homology"/>
<name>COAE_CERS4</name>
<comment type="function">
    <text evidence="1">Catalyzes the phosphorylation of the 3'-hydroxyl group of dephosphocoenzyme A to form coenzyme A.</text>
</comment>
<comment type="catalytic activity">
    <reaction evidence="1">
        <text>3'-dephospho-CoA + ATP = ADP + CoA + H(+)</text>
        <dbReference type="Rhea" id="RHEA:18245"/>
        <dbReference type="ChEBI" id="CHEBI:15378"/>
        <dbReference type="ChEBI" id="CHEBI:30616"/>
        <dbReference type="ChEBI" id="CHEBI:57287"/>
        <dbReference type="ChEBI" id="CHEBI:57328"/>
        <dbReference type="ChEBI" id="CHEBI:456216"/>
        <dbReference type="EC" id="2.7.1.24"/>
    </reaction>
</comment>
<comment type="pathway">
    <text evidence="1">Cofactor biosynthesis; coenzyme A biosynthesis; CoA from (R)-pantothenate: step 5/5.</text>
</comment>
<comment type="subcellular location">
    <subcellularLocation>
        <location evidence="1">Cytoplasm</location>
    </subcellularLocation>
</comment>
<comment type="similarity">
    <text evidence="1">Belongs to the CoaE family.</text>
</comment>
<accession>Q3IYG8</accession>
<protein>
    <recommendedName>
        <fullName evidence="1">Dephospho-CoA kinase</fullName>
        <ecNumber evidence="1">2.7.1.24</ecNumber>
    </recommendedName>
    <alternativeName>
        <fullName evidence="1">Dephosphocoenzyme A kinase</fullName>
    </alternativeName>
</protein>
<reference key="1">
    <citation type="submission" date="2005-09" db="EMBL/GenBank/DDBJ databases">
        <title>Complete sequence of chromosome 1 of Rhodobacter sphaeroides 2.4.1.</title>
        <authorList>
            <person name="Copeland A."/>
            <person name="Lucas S."/>
            <person name="Lapidus A."/>
            <person name="Barry K."/>
            <person name="Detter J.C."/>
            <person name="Glavina T."/>
            <person name="Hammon N."/>
            <person name="Israni S."/>
            <person name="Pitluck S."/>
            <person name="Richardson P."/>
            <person name="Mackenzie C."/>
            <person name="Choudhary M."/>
            <person name="Larimer F."/>
            <person name="Hauser L.J."/>
            <person name="Land M."/>
            <person name="Donohue T.J."/>
            <person name="Kaplan S."/>
        </authorList>
    </citation>
    <scope>NUCLEOTIDE SEQUENCE [LARGE SCALE GENOMIC DNA]</scope>
    <source>
        <strain>ATCC 17023 / DSM 158 / JCM 6121 / CCUG 31486 / LMG 2827 / NBRC 12203 / NCIMB 8253 / ATH 2.4.1.</strain>
    </source>
</reference>
<sequence>MRPFRLGLTGSIGMGKSTTAALFAEEGVPVWDADAAVHRLYAPGGALVGPVAALCPAALKGGAVDRGALRDWIAADPTALPRLEALVHPAVAADRAAFLAHARTDIVLLDIPLLYEKGSEAEMDAVLLVTAPPVLQRARVLGRGTMTEAQFEAILARQMPDREKRARATHILETLGLEAARAYVRALIAHIRETADA</sequence>
<feature type="chain" id="PRO_0000243327" description="Dephospho-CoA kinase">
    <location>
        <begin position="1"/>
        <end position="197"/>
    </location>
</feature>
<feature type="domain" description="DPCK" evidence="1">
    <location>
        <begin position="5"/>
        <end position="197"/>
    </location>
</feature>
<feature type="binding site" evidence="1">
    <location>
        <begin position="13"/>
        <end position="18"/>
    </location>
    <ligand>
        <name>ATP</name>
        <dbReference type="ChEBI" id="CHEBI:30616"/>
    </ligand>
</feature>
<gene>
    <name evidence="1" type="primary">coaE</name>
    <name type="ordered locus">RHOS4_28480</name>
    <name type="ORF">RSP_1235</name>
</gene>